<sequence length="55" mass="6452">MASSTDVRPKITLACEVCKHRNYITKKNRRNDPDRLELKKFCPNCGVHRAHKESR</sequence>
<reference key="1">
    <citation type="submission" date="2007-02" db="EMBL/GenBank/DDBJ databases">
        <title>Complete sequence of Mycobacterium sp. JLS.</title>
        <authorList>
            <consortium name="US DOE Joint Genome Institute"/>
            <person name="Copeland A."/>
            <person name="Lucas S."/>
            <person name="Lapidus A."/>
            <person name="Barry K."/>
            <person name="Detter J.C."/>
            <person name="Glavina del Rio T."/>
            <person name="Hammon N."/>
            <person name="Israni S."/>
            <person name="Dalin E."/>
            <person name="Tice H."/>
            <person name="Pitluck S."/>
            <person name="Chain P."/>
            <person name="Malfatti S."/>
            <person name="Shin M."/>
            <person name="Vergez L."/>
            <person name="Schmutz J."/>
            <person name="Larimer F."/>
            <person name="Land M."/>
            <person name="Hauser L."/>
            <person name="Kyrpides N."/>
            <person name="Mikhailova N."/>
            <person name="Miller C.D."/>
            <person name="Anderson A.J."/>
            <person name="Sims R.C."/>
            <person name="Richardson P."/>
        </authorList>
    </citation>
    <scope>NUCLEOTIDE SEQUENCE [LARGE SCALE GENOMIC DNA]</scope>
    <source>
        <strain>JLS</strain>
    </source>
</reference>
<protein>
    <recommendedName>
        <fullName evidence="1">Large ribosomal subunit protein bL33A</fullName>
    </recommendedName>
    <alternativeName>
        <fullName evidence="1">50S ribosomal protein L33 1</fullName>
    </alternativeName>
</protein>
<accession>A3PV27</accession>
<evidence type="ECO:0000255" key="1">
    <source>
        <dbReference type="HAMAP-Rule" id="MF_00294"/>
    </source>
</evidence>
<dbReference type="EMBL" id="CP000580">
    <property type="protein sequence ID" value="ABN96754.1"/>
    <property type="molecule type" value="Genomic_DNA"/>
</dbReference>
<dbReference type="SMR" id="A3PV27"/>
<dbReference type="KEGG" id="mjl:Mjls_0945"/>
<dbReference type="HOGENOM" id="CLU_190949_0_2_11"/>
<dbReference type="BioCyc" id="MSP164757:G1G8C-957-MONOMER"/>
<dbReference type="GO" id="GO:0005737">
    <property type="term" value="C:cytoplasm"/>
    <property type="evidence" value="ECO:0007669"/>
    <property type="project" value="UniProtKB-ARBA"/>
</dbReference>
<dbReference type="GO" id="GO:1990904">
    <property type="term" value="C:ribonucleoprotein complex"/>
    <property type="evidence" value="ECO:0007669"/>
    <property type="project" value="UniProtKB-KW"/>
</dbReference>
<dbReference type="GO" id="GO:0005840">
    <property type="term" value="C:ribosome"/>
    <property type="evidence" value="ECO:0007669"/>
    <property type="project" value="UniProtKB-KW"/>
</dbReference>
<dbReference type="GO" id="GO:0003735">
    <property type="term" value="F:structural constituent of ribosome"/>
    <property type="evidence" value="ECO:0007669"/>
    <property type="project" value="InterPro"/>
</dbReference>
<dbReference type="GO" id="GO:0006412">
    <property type="term" value="P:translation"/>
    <property type="evidence" value="ECO:0007669"/>
    <property type="project" value="UniProtKB-UniRule"/>
</dbReference>
<dbReference type="Gene3D" id="2.20.28.120">
    <property type="entry name" value="Ribosomal protein L33"/>
    <property type="match status" value="1"/>
</dbReference>
<dbReference type="HAMAP" id="MF_00294">
    <property type="entry name" value="Ribosomal_bL33"/>
    <property type="match status" value="1"/>
</dbReference>
<dbReference type="InterPro" id="IPR001705">
    <property type="entry name" value="Ribosomal_bL33"/>
</dbReference>
<dbReference type="InterPro" id="IPR018264">
    <property type="entry name" value="Ribosomal_bL33_CS"/>
</dbReference>
<dbReference type="InterPro" id="IPR038584">
    <property type="entry name" value="Ribosomal_bL33_sf"/>
</dbReference>
<dbReference type="InterPro" id="IPR011332">
    <property type="entry name" value="Ribosomal_zn-bd"/>
</dbReference>
<dbReference type="NCBIfam" id="NF001764">
    <property type="entry name" value="PRK00504.1"/>
    <property type="match status" value="1"/>
</dbReference>
<dbReference type="NCBIfam" id="NF001860">
    <property type="entry name" value="PRK00595.1"/>
    <property type="match status" value="1"/>
</dbReference>
<dbReference type="NCBIfam" id="TIGR01023">
    <property type="entry name" value="rpmG_bact"/>
    <property type="match status" value="1"/>
</dbReference>
<dbReference type="PANTHER" id="PTHR43168">
    <property type="entry name" value="50S RIBOSOMAL PROTEIN L33, CHLOROPLASTIC"/>
    <property type="match status" value="1"/>
</dbReference>
<dbReference type="PANTHER" id="PTHR43168:SF2">
    <property type="entry name" value="LARGE RIBOSOMAL SUBUNIT PROTEIN BL33C"/>
    <property type="match status" value="1"/>
</dbReference>
<dbReference type="Pfam" id="PF00471">
    <property type="entry name" value="Ribosomal_L33"/>
    <property type="match status" value="1"/>
</dbReference>
<dbReference type="SUPFAM" id="SSF57829">
    <property type="entry name" value="Zn-binding ribosomal proteins"/>
    <property type="match status" value="1"/>
</dbReference>
<dbReference type="PROSITE" id="PS00582">
    <property type="entry name" value="RIBOSOMAL_L33"/>
    <property type="match status" value="1"/>
</dbReference>
<keyword id="KW-0687">Ribonucleoprotein</keyword>
<keyword id="KW-0689">Ribosomal protein</keyword>
<comment type="similarity">
    <text evidence="1">Belongs to the bacterial ribosomal protein bL33 family.</text>
</comment>
<proteinExistence type="inferred from homology"/>
<organism>
    <name type="scientific">Mycobacterium sp. (strain JLS)</name>
    <dbReference type="NCBI Taxonomy" id="164757"/>
    <lineage>
        <taxon>Bacteria</taxon>
        <taxon>Bacillati</taxon>
        <taxon>Actinomycetota</taxon>
        <taxon>Actinomycetes</taxon>
        <taxon>Mycobacteriales</taxon>
        <taxon>Mycobacteriaceae</taxon>
        <taxon>Mycobacterium</taxon>
    </lineage>
</organism>
<gene>
    <name evidence="1" type="primary">rpmG1</name>
    <name type="ordered locus">Mjls_0945</name>
</gene>
<feature type="chain" id="PRO_0000356558" description="Large ribosomal subunit protein bL33A">
    <location>
        <begin position="1"/>
        <end position="55"/>
    </location>
</feature>
<name>RL331_MYCSJ</name>